<gene>
    <name type="primary">Thbs4</name>
    <name type="synonym">Tsp-4</name>
    <name type="synonym">Tsp4</name>
</gene>
<sequence>MTMITPSSKLTLTKGNKSWSSTRCGAFLLLHLVLQPWQRAGAQATPQVFDLLPSSSQRLNPAALQPVLTDPTLHELYVISTFKLQSKSSATIFGLYSSSDNSKYFEFTVMGRLNKAILRYLKDDGKIHLVVFNNLQLADGRRHRILLRLSNLQRGAGSVELYLDCVQVDSVNNLPRAFSGLTQNPQAIELRTFQRKPQDFLEELKLVVRGSLFQVASLQDCFLQQSEPLAATGTGDFNRQFLGQMTQLNQLLGEVKDLLRQQVKETSFLRNTIAECQACGPLSFQSPTPNTLVPIAPPAPPTRPTRRCDSSPCFRGVRCTDTRDGFQCGPCPDGYTGNGITCSDVDECKYHPCYPGVRCTNLAPGFRCDACPVGFTGPMVQGVGINFAKTNKQVCTDVDECRNGACVLNSICINTLGSYRCGPCKPGYTGDQTRGCRTERSCRNPEQNPCSVHAQCIEERQGDVTCVCGVGWAGRAGYVCGKDVDIDSYPDEELPCSARNCKKDNCKYVPNSGQEDADRDGIGDACDEDADGDGILNEQDNCVLTHNVDQRNTDKDIFGDACDNCRGVLNNDQKDTDGDGKGDACDDDMDGDGIKNILDNCPRVPNRDQQDRDGDGVGDACDSCPDVSNPNQSDVDNDLVGDSCDTNQDSDGDGHQDSTDNCPTVINSAQLDTDKDGIGDECDDDDDNDGMPDLFPPGPDNCRLVPNPAQEDSNNDGVGDICEADFDQDKVIDRIDVCPENAEITLTDFRAYQTVVLDPEGDAQIDPNWVVLNQGMEIVQTMNSDPGLAVGYTAFNGVDFEGTFHVNTQTDDDYAGFIFGYQDSSSFYVVMWKQTEQTYWQATPFRAVAEPGIQLKAVKSKTGPGEHLRNSLWHTGDTSDQVRLLWKDSRNVGWKDKVSYRWFLQHRPQVGYIRVRFYEGSELVADSGVTIDTTMRGGRLGVFCFSQENIIWSNLKYRCNDTIPEDFQEFQIQTFDRLDN</sequence>
<feature type="signal peptide" evidence="3">
    <location>
        <begin position="1"/>
        <end position="42"/>
    </location>
</feature>
<feature type="chain" id="PRO_0000035854" description="Thrombospondin-4">
    <location>
        <begin position="43"/>
        <end position="980"/>
    </location>
</feature>
<feature type="domain" description="Laminin G-like">
    <location>
        <begin position="43"/>
        <end position="210"/>
    </location>
</feature>
<feature type="domain" description="EGF-like 1" evidence="4">
    <location>
        <begin position="304"/>
        <end position="343"/>
    </location>
</feature>
<feature type="domain" description="EGF-like 2; calcium-binding" evidence="4">
    <location>
        <begin position="344"/>
        <end position="381"/>
    </location>
</feature>
<feature type="domain" description="EGF-like 3; calcium-binding" evidence="4">
    <location>
        <begin position="397"/>
        <end position="434"/>
    </location>
</feature>
<feature type="domain" description="EGF-like 4" evidence="4">
    <location>
        <begin position="438"/>
        <end position="481"/>
    </location>
</feature>
<feature type="repeat" description="TSP type-3 1">
    <location>
        <begin position="482"/>
        <end position="514"/>
    </location>
</feature>
<feature type="repeat" description="TSP type-3 2">
    <location>
        <begin position="515"/>
        <end position="550"/>
    </location>
</feature>
<feature type="repeat" description="TSP type-3 3">
    <location>
        <begin position="551"/>
        <end position="573"/>
    </location>
</feature>
<feature type="repeat" description="TSP type-3 4">
    <location>
        <begin position="574"/>
        <end position="609"/>
    </location>
</feature>
<feature type="repeat" description="TSP type-3 5">
    <location>
        <begin position="610"/>
        <end position="632"/>
    </location>
</feature>
<feature type="repeat" description="TSP type-3 6">
    <location>
        <begin position="633"/>
        <end position="670"/>
    </location>
</feature>
<feature type="repeat" description="TSP type-3 7">
    <location>
        <begin position="671"/>
        <end position="710"/>
    </location>
</feature>
<feature type="repeat" description="TSP type-3 8">
    <location>
        <begin position="711"/>
        <end position="746"/>
    </location>
</feature>
<feature type="domain" description="TSP C-terminal" evidence="5">
    <location>
        <begin position="750"/>
        <end position="964"/>
    </location>
</feature>
<feature type="region of interest" description="Disordered" evidence="6">
    <location>
        <begin position="596"/>
        <end position="691"/>
    </location>
</feature>
<feature type="compositionally biased region" description="Basic and acidic residues" evidence="6">
    <location>
        <begin position="605"/>
        <end position="615"/>
    </location>
</feature>
<feature type="compositionally biased region" description="Polar residues" evidence="6">
    <location>
        <begin position="659"/>
        <end position="671"/>
    </location>
</feature>
<feature type="compositionally biased region" description="Acidic residues" evidence="6">
    <location>
        <begin position="679"/>
        <end position="690"/>
    </location>
</feature>
<feature type="glycosylation site" description="N-linked (GlcNAc...) asparagine" evidence="3">
    <location>
        <position position="631"/>
    </location>
</feature>
<feature type="glycosylation site" description="N-linked (GlcNAc...) asparagine" evidence="3">
    <location>
        <position position="960"/>
    </location>
</feature>
<feature type="disulfide bond" description="Interchain" evidence="9">
    <location>
        <position position="276"/>
    </location>
</feature>
<feature type="disulfide bond" description="Interchain" evidence="9">
    <location>
        <position position="279"/>
    </location>
</feature>
<feature type="disulfide bond" evidence="4">
    <location>
        <begin position="308"/>
        <end position="319"/>
    </location>
</feature>
<feature type="disulfide bond" evidence="4">
    <location>
        <begin position="313"/>
        <end position="328"/>
    </location>
</feature>
<feature type="disulfide bond" evidence="4">
    <location>
        <begin position="331"/>
        <end position="342"/>
    </location>
</feature>
<feature type="disulfide bond" evidence="4">
    <location>
        <begin position="348"/>
        <end position="359"/>
    </location>
</feature>
<feature type="disulfide bond" evidence="4">
    <location>
        <begin position="353"/>
        <end position="368"/>
    </location>
</feature>
<feature type="disulfide bond" evidence="4">
    <location>
        <begin position="371"/>
        <end position="395"/>
    </location>
</feature>
<feature type="disulfide bond" evidence="4">
    <location>
        <begin position="401"/>
        <end position="412"/>
    </location>
</feature>
<feature type="disulfide bond" evidence="4">
    <location>
        <begin position="406"/>
        <end position="421"/>
    </location>
</feature>
<feature type="disulfide bond" evidence="4">
    <location>
        <begin position="424"/>
        <end position="436"/>
    </location>
</feature>
<feature type="disulfide bond" evidence="4">
    <location>
        <begin position="442"/>
        <end position="456"/>
    </location>
</feature>
<feature type="disulfide bond" evidence="4">
    <location>
        <begin position="450"/>
        <end position="466"/>
    </location>
</feature>
<feature type="disulfide bond" evidence="4">
    <location>
        <begin position="468"/>
        <end position="480"/>
    </location>
</feature>
<feature type="disulfide bond" evidence="4">
    <location>
        <begin position="496"/>
        <end position="501"/>
    </location>
</feature>
<feature type="disulfide bond" evidence="4">
    <location>
        <begin position="506"/>
        <end position="526"/>
    </location>
</feature>
<feature type="disulfide bond" evidence="4">
    <location>
        <begin position="542"/>
        <end position="562"/>
    </location>
</feature>
<feature type="disulfide bond" evidence="4">
    <location>
        <begin position="565"/>
        <end position="585"/>
    </location>
</feature>
<feature type="disulfide bond" evidence="4">
    <location>
        <begin position="601"/>
        <end position="621"/>
    </location>
</feature>
<feature type="disulfide bond" evidence="4">
    <location>
        <begin position="624"/>
        <end position="644"/>
    </location>
</feature>
<feature type="disulfide bond" evidence="4">
    <location>
        <begin position="662"/>
        <end position="682"/>
    </location>
</feature>
<feature type="disulfide bond" evidence="4">
    <location>
        <begin position="702"/>
        <end position="722"/>
    </location>
</feature>
<feature type="disulfide bond" evidence="4">
    <location>
        <begin position="738"/>
        <end position="959"/>
    </location>
</feature>
<accession>P49744</accession>
<protein>
    <recommendedName>
        <fullName>Thrombospondin-4</fullName>
    </recommendedName>
</protein>
<dbReference type="EMBL" id="X89963">
    <property type="protein sequence ID" value="CAA62002.1"/>
    <property type="molecule type" value="mRNA"/>
</dbReference>
<dbReference type="SMR" id="P49744"/>
<dbReference type="ComplexPortal" id="CPX-4106">
    <property type="entry name" value="Thrombospondin 4 complex"/>
</dbReference>
<dbReference type="FunCoup" id="P49744">
    <property type="interactions" value="231"/>
</dbReference>
<dbReference type="IntAct" id="P49744">
    <property type="interactions" value="1"/>
</dbReference>
<dbReference type="STRING" id="10116.ENSRNOP00000074259"/>
<dbReference type="GlyCosmos" id="P49744">
    <property type="glycosylation" value="2 sites, No reported glycans"/>
</dbReference>
<dbReference type="GlyGen" id="P49744">
    <property type="glycosylation" value="2 sites"/>
</dbReference>
<dbReference type="PhosphoSitePlus" id="P49744"/>
<dbReference type="PaxDb" id="10116-ENSRNOP00000062272"/>
<dbReference type="UCSC" id="RGD:62046">
    <property type="organism name" value="rat"/>
</dbReference>
<dbReference type="AGR" id="RGD:62046"/>
<dbReference type="RGD" id="62046">
    <property type="gene designation" value="Thbs4"/>
</dbReference>
<dbReference type="eggNOG" id="ENOG502QRK8">
    <property type="taxonomic scope" value="Eukaryota"/>
</dbReference>
<dbReference type="InParanoid" id="P49744"/>
<dbReference type="PhylomeDB" id="P49744"/>
<dbReference type="Reactome" id="R-RNO-186797">
    <property type="pathway name" value="Signaling by PDGF"/>
</dbReference>
<dbReference type="PRO" id="PR:P49744"/>
<dbReference type="Proteomes" id="UP000002494">
    <property type="component" value="Unplaced"/>
</dbReference>
<dbReference type="GO" id="GO:0005604">
    <property type="term" value="C:basement membrane"/>
    <property type="evidence" value="ECO:0000266"/>
    <property type="project" value="RGD"/>
</dbReference>
<dbReference type="GO" id="GO:0062023">
    <property type="term" value="C:collagen-containing extracellular matrix"/>
    <property type="evidence" value="ECO:0000250"/>
    <property type="project" value="UniProtKB"/>
</dbReference>
<dbReference type="GO" id="GO:0005783">
    <property type="term" value="C:endoplasmic reticulum"/>
    <property type="evidence" value="ECO:0000250"/>
    <property type="project" value="UniProtKB"/>
</dbReference>
<dbReference type="GO" id="GO:0005615">
    <property type="term" value="C:extracellular space"/>
    <property type="evidence" value="ECO:0000250"/>
    <property type="project" value="UniProtKB"/>
</dbReference>
<dbReference type="GO" id="GO:0031594">
    <property type="term" value="C:neuromuscular junction"/>
    <property type="evidence" value="ECO:0000314"/>
    <property type="project" value="RGD"/>
</dbReference>
<dbReference type="GO" id="GO:0016529">
    <property type="term" value="C:sarcoplasmic reticulum"/>
    <property type="evidence" value="ECO:0000250"/>
    <property type="project" value="UniProtKB"/>
</dbReference>
<dbReference type="GO" id="GO:0005509">
    <property type="term" value="F:calcium ion binding"/>
    <property type="evidence" value="ECO:0000266"/>
    <property type="project" value="RGD"/>
</dbReference>
<dbReference type="GO" id="GO:0005518">
    <property type="term" value="F:collagen binding"/>
    <property type="evidence" value="ECO:0000314"/>
    <property type="project" value="RGD"/>
</dbReference>
<dbReference type="GO" id="GO:0001968">
    <property type="term" value="F:fibronectin binding"/>
    <property type="evidence" value="ECO:0000314"/>
    <property type="project" value="RGD"/>
</dbReference>
<dbReference type="GO" id="GO:0008083">
    <property type="term" value="F:growth factor activity"/>
    <property type="evidence" value="ECO:0007669"/>
    <property type="project" value="UniProtKB-KW"/>
</dbReference>
<dbReference type="GO" id="GO:0008201">
    <property type="term" value="F:heparin binding"/>
    <property type="evidence" value="ECO:0000266"/>
    <property type="project" value="RGD"/>
</dbReference>
<dbReference type="GO" id="GO:0042802">
    <property type="term" value="F:identical protein binding"/>
    <property type="evidence" value="ECO:0000353"/>
    <property type="project" value="RGD"/>
</dbReference>
<dbReference type="GO" id="GO:0005178">
    <property type="term" value="F:integrin binding"/>
    <property type="evidence" value="ECO:0000266"/>
    <property type="project" value="RGD"/>
</dbReference>
<dbReference type="GO" id="GO:0043237">
    <property type="term" value="F:laminin-1 binding"/>
    <property type="evidence" value="ECO:0000314"/>
    <property type="project" value="RGD"/>
</dbReference>
<dbReference type="GO" id="GO:0048266">
    <property type="term" value="P:behavioral response to pain"/>
    <property type="evidence" value="ECO:0000315"/>
    <property type="project" value="UniProtKB"/>
</dbReference>
<dbReference type="GO" id="GO:0071603">
    <property type="term" value="P:endothelial cell-cell adhesion"/>
    <property type="evidence" value="ECO:0000266"/>
    <property type="project" value="RGD"/>
</dbReference>
<dbReference type="GO" id="GO:0051451">
    <property type="term" value="P:myoblast migration"/>
    <property type="evidence" value="ECO:0000266"/>
    <property type="project" value="RGD"/>
</dbReference>
<dbReference type="GO" id="GO:0016525">
    <property type="term" value="P:negative regulation of angiogenesis"/>
    <property type="evidence" value="ECO:0000266"/>
    <property type="project" value="RGD"/>
</dbReference>
<dbReference type="GO" id="GO:0007399">
    <property type="term" value="P:nervous system development"/>
    <property type="evidence" value="ECO:0000314"/>
    <property type="project" value="RGD"/>
</dbReference>
<dbReference type="GO" id="GO:0048812">
    <property type="term" value="P:neuron projection morphogenesis"/>
    <property type="evidence" value="ECO:0000314"/>
    <property type="project" value="RGD"/>
</dbReference>
<dbReference type="GO" id="GO:0051781">
    <property type="term" value="P:positive regulation of cell division"/>
    <property type="evidence" value="ECO:0007669"/>
    <property type="project" value="UniProtKB-KW"/>
</dbReference>
<dbReference type="GO" id="GO:0001938">
    <property type="term" value="P:positive regulation of endothelial cell proliferation"/>
    <property type="evidence" value="ECO:0000266"/>
    <property type="project" value="RGD"/>
</dbReference>
<dbReference type="GO" id="GO:0090023">
    <property type="term" value="P:positive regulation of neutrophil chemotaxis"/>
    <property type="evidence" value="ECO:0000266"/>
    <property type="project" value="RGD"/>
</dbReference>
<dbReference type="GO" id="GO:0034103">
    <property type="term" value="P:regulation of tissue remodeling"/>
    <property type="evidence" value="ECO:0000250"/>
    <property type="project" value="UniProtKB"/>
</dbReference>
<dbReference type="GO" id="GO:0034976">
    <property type="term" value="P:response to endoplasmic reticulum stress"/>
    <property type="evidence" value="ECO:0000250"/>
    <property type="project" value="UniProtKB"/>
</dbReference>
<dbReference type="GO" id="GO:0006986">
    <property type="term" value="P:response to unfolded protein"/>
    <property type="evidence" value="ECO:0007669"/>
    <property type="project" value="UniProtKB-KW"/>
</dbReference>
<dbReference type="GO" id="GO:0048771">
    <property type="term" value="P:tissue remodeling"/>
    <property type="evidence" value="ECO:0007669"/>
    <property type="project" value="UniProtKB-KW"/>
</dbReference>
<dbReference type="CDD" id="cd00054">
    <property type="entry name" value="EGF_CA"/>
    <property type="match status" value="3"/>
</dbReference>
<dbReference type="CDD" id="cd16080">
    <property type="entry name" value="TSP-4cc"/>
    <property type="match status" value="1"/>
</dbReference>
<dbReference type="FunFam" id="4.10.1080.10:FF:000004">
    <property type="entry name" value="Cartilage oligomeric matrix protein"/>
    <property type="match status" value="1"/>
</dbReference>
<dbReference type="FunFam" id="2.10.25.10:FF:000025">
    <property type="entry name" value="Thrombospondin 3"/>
    <property type="match status" value="1"/>
</dbReference>
<dbReference type="FunFam" id="2.10.25.10:FF:000027">
    <property type="entry name" value="Thrombospondin 3"/>
    <property type="match status" value="1"/>
</dbReference>
<dbReference type="FunFam" id="2.60.120.200:FF:000002">
    <property type="entry name" value="Thrombospondin 3"/>
    <property type="match status" value="1"/>
</dbReference>
<dbReference type="FunFam" id="4.10.1080.10:FF:000001">
    <property type="entry name" value="Thrombospondin 3"/>
    <property type="match status" value="1"/>
</dbReference>
<dbReference type="FunFam" id="2.10.25.10:FF:000262">
    <property type="entry name" value="Thrombospondin 4"/>
    <property type="match status" value="1"/>
</dbReference>
<dbReference type="FunFam" id="2.10.25.10:FF:000277">
    <property type="entry name" value="Thrombospondin 4"/>
    <property type="match status" value="1"/>
</dbReference>
<dbReference type="FunFam" id="2.60.120.200:FF:000123">
    <property type="entry name" value="Thrombospondin 4"/>
    <property type="match status" value="1"/>
</dbReference>
<dbReference type="FunFam" id="1.20.5.10:FF:000001">
    <property type="entry name" value="thrombospondin-3 isoform X2"/>
    <property type="match status" value="1"/>
</dbReference>
<dbReference type="Gene3D" id="1.20.5.10">
    <property type="match status" value="1"/>
</dbReference>
<dbReference type="Gene3D" id="2.60.120.200">
    <property type="match status" value="2"/>
</dbReference>
<dbReference type="Gene3D" id="2.10.25.10">
    <property type="entry name" value="Laminin"/>
    <property type="match status" value="4"/>
</dbReference>
<dbReference type="Gene3D" id="4.10.1080.10">
    <property type="entry name" value="TSP type-3 repeat"/>
    <property type="match status" value="2"/>
</dbReference>
<dbReference type="InterPro" id="IPR013320">
    <property type="entry name" value="ConA-like_dom_sf"/>
</dbReference>
<dbReference type="InterPro" id="IPR001881">
    <property type="entry name" value="EGF-like_Ca-bd_dom"/>
</dbReference>
<dbReference type="InterPro" id="IPR000742">
    <property type="entry name" value="EGF-like_dom"/>
</dbReference>
<dbReference type="InterPro" id="IPR018097">
    <property type="entry name" value="EGF_Ca-bd_CS"/>
</dbReference>
<dbReference type="InterPro" id="IPR003367">
    <property type="entry name" value="Thrombospondin_3-like_rpt"/>
</dbReference>
<dbReference type="InterPro" id="IPR017897">
    <property type="entry name" value="Thrombospondin_3_rpt"/>
</dbReference>
<dbReference type="InterPro" id="IPR008859">
    <property type="entry name" value="Thrombospondin_C"/>
</dbReference>
<dbReference type="InterPro" id="IPR024665">
    <property type="entry name" value="TSP/COMP_coiled-coil"/>
</dbReference>
<dbReference type="InterPro" id="IPR046970">
    <property type="entry name" value="TSP/COMP_coiled-coil_sf"/>
</dbReference>
<dbReference type="InterPro" id="IPR028974">
    <property type="entry name" value="TSP_type-3_rpt"/>
</dbReference>
<dbReference type="InterPro" id="IPR048287">
    <property type="entry name" value="TSPN-like_N"/>
</dbReference>
<dbReference type="PANTHER" id="PTHR10199">
    <property type="entry name" value="THROMBOSPONDIN"/>
    <property type="match status" value="1"/>
</dbReference>
<dbReference type="PANTHER" id="PTHR10199:SF92">
    <property type="entry name" value="THROMBOSPONDIN-4"/>
    <property type="match status" value="1"/>
</dbReference>
<dbReference type="Pfam" id="PF11598">
    <property type="entry name" value="COMP"/>
    <property type="match status" value="1"/>
</dbReference>
<dbReference type="Pfam" id="PF00008">
    <property type="entry name" value="EGF"/>
    <property type="match status" value="1"/>
</dbReference>
<dbReference type="Pfam" id="PF02412">
    <property type="entry name" value="TSP_3"/>
    <property type="match status" value="5"/>
</dbReference>
<dbReference type="Pfam" id="PF05735">
    <property type="entry name" value="TSP_C"/>
    <property type="match status" value="1"/>
</dbReference>
<dbReference type="SMART" id="SM00181">
    <property type="entry name" value="EGF"/>
    <property type="match status" value="4"/>
</dbReference>
<dbReference type="SMART" id="SM00179">
    <property type="entry name" value="EGF_CA"/>
    <property type="match status" value="3"/>
</dbReference>
<dbReference type="SMART" id="SM00210">
    <property type="entry name" value="TSPN"/>
    <property type="match status" value="1"/>
</dbReference>
<dbReference type="SUPFAM" id="SSF58006">
    <property type="entry name" value="Assembly domain of cartilage oligomeric matrix protein"/>
    <property type="match status" value="1"/>
</dbReference>
<dbReference type="SUPFAM" id="SSF49899">
    <property type="entry name" value="Concanavalin A-like lectins/glucanases"/>
    <property type="match status" value="2"/>
</dbReference>
<dbReference type="SUPFAM" id="SSF57196">
    <property type="entry name" value="EGF/Laminin"/>
    <property type="match status" value="1"/>
</dbReference>
<dbReference type="SUPFAM" id="SSF103647">
    <property type="entry name" value="TSP type-3 repeat"/>
    <property type="match status" value="3"/>
</dbReference>
<dbReference type="PROSITE" id="PS01186">
    <property type="entry name" value="EGF_2"/>
    <property type="match status" value="1"/>
</dbReference>
<dbReference type="PROSITE" id="PS50026">
    <property type="entry name" value="EGF_3"/>
    <property type="match status" value="4"/>
</dbReference>
<dbReference type="PROSITE" id="PS01187">
    <property type="entry name" value="EGF_CA"/>
    <property type="match status" value="2"/>
</dbReference>
<dbReference type="PROSITE" id="PS51234">
    <property type="entry name" value="TSP3"/>
    <property type="match status" value="8"/>
</dbReference>
<dbReference type="PROSITE" id="PS51236">
    <property type="entry name" value="TSP_CTER"/>
    <property type="match status" value="1"/>
</dbReference>
<evidence type="ECO:0000250" key="1"/>
<evidence type="ECO:0000250" key="2">
    <source>
        <dbReference type="UniProtKB" id="Q9Z1T2"/>
    </source>
</evidence>
<evidence type="ECO:0000255" key="3"/>
<evidence type="ECO:0000255" key="4">
    <source>
        <dbReference type="PROSITE-ProRule" id="PRU00076"/>
    </source>
</evidence>
<evidence type="ECO:0000255" key="5">
    <source>
        <dbReference type="PROSITE-ProRule" id="PRU00635"/>
    </source>
</evidence>
<evidence type="ECO:0000256" key="6">
    <source>
        <dbReference type="SAM" id="MobiDB-lite"/>
    </source>
</evidence>
<evidence type="ECO:0000269" key="7">
    <source>
    </source>
</evidence>
<evidence type="ECO:0000269" key="8">
    <source>
    </source>
</evidence>
<evidence type="ECO:0000305" key="9"/>
<keyword id="KW-0106">Calcium</keyword>
<keyword id="KW-0130">Cell adhesion</keyword>
<keyword id="KW-1015">Disulfide bond</keyword>
<keyword id="KW-0245">EGF-like domain</keyword>
<keyword id="KW-0256">Endoplasmic reticulum</keyword>
<keyword id="KW-0272">Extracellular matrix</keyword>
<keyword id="KW-0325">Glycoprotein</keyword>
<keyword id="KW-0339">Growth factor</keyword>
<keyword id="KW-0497">Mitogen</keyword>
<keyword id="KW-1185">Reference proteome</keyword>
<keyword id="KW-0677">Repeat</keyword>
<keyword id="KW-0703">Sarcoplasmic reticulum</keyword>
<keyword id="KW-0964">Secreted</keyword>
<keyword id="KW-0732">Signal</keyword>
<keyword id="KW-0797">Tissue remodeling</keyword>
<keyword id="KW-0834">Unfolded protein response</keyword>
<reference key="1">
    <citation type="journal article" date="1995" name="J. Cell Biol.">
        <title>Thrombospondin-4, an extracellular matrix protein expressed in the developing and adult nervous system promotes neurite outgrowth.</title>
        <authorList>
            <person name="Arber S."/>
            <person name="Caroni P."/>
        </authorList>
    </citation>
    <scope>NUCLEOTIDE SEQUENCE [MRNA]</scope>
    <source>
        <strain>Lewis</strain>
        <tissue>Skeletal muscle</tissue>
    </source>
</reference>
<reference key="2">
    <citation type="journal article" date="2012" name="J. Neurosci.">
        <title>Thrombospondin-4 contributes to spinal sensitization and neuropathic pain states.</title>
        <authorList>
            <person name="Kim D.S."/>
            <person name="Li K.W."/>
            <person name="Boroujerdi A."/>
            <person name="Peter Yu Y."/>
            <person name="Zhou C.Y."/>
            <person name="Deng P."/>
            <person name="Park J."/>
            <person name="Zhang X."/>
            <person name="Lee J."/>
            <person name="Corpe M."/>
            <person name="Sharp K."/>
            <person name="Steward O."/>
            <person name="Eroglu C."/>
            <person name="Barres B."/>
            <person name="Zaucke F."/>
            <person name="Xu Z.C."/>
            <person name="Luo Z.D."/>
        </authorList>
    </citation>
    <scope>FUNCTION</scope>
    <scope>TISSUE SPECIFICITY</scope>
</reference>
<reference key="3">
    <citation type="journal article" date="2013" name="Eur. J. Pain">
        <title>Thrombospondin-4 contributes to spinal cord injury-induced changes in nociception.</title>
        <authorList>
            <person name="Zeng J."/>
            <person name="Kim D."/>
            <person name="Li K.W."/>
            <person name="Sharp K."/>
            <person name="Steward O."/>
            <person name="Zaucke F."/>
            <person name="Luo Z.D."/>
        </authorList>
    </citation>
    <scope>FUNCTION</scope>
    <scope>TISSUE SPECIFICITY</scope>
</reference>
<name>TSP4_RAT</name>
<comment type="function">
    <text evidence="7 8">Adhesive glycoprotein that mediates cell-to-cell and cell-to-matrix interactions and is involved in various processes including cellular proliferation, migration, adhesion and attachment, inflammatory response to CNS injury, regulation of vascular inflammation and adaptive responses of the heart to pressure overload and in myocardial function and remodeling. Binds to structural extracellular matrix (ECM) proteins and modulates the ECM in response to tissue damage, contributing to cardioprotective and adaptive ECM remodeling. Plays a role in ER stress response, via its interaction with the activating transcription factor 6 alpha (ATF6) which produces adaptive ER stress response factors and protects myocardium from pressure overload. May contribute to spinal presynaptic hypersensitivity and neuropathic pain states after peripheral nerve injury. May play a role in regulating protective astrogenesis from the subventricular zone (SVZ) niche after injury in a NOTCH1-dependent manner.</text>
</comment>
<comment type="subunit">
    <text evidence="1">Homopentamer; disulfide-linked. Interacts with PTBP3 (By similarity). Interacts (via EGF-like 3; calcium-binding domain) with ATF6 and facilitates its processing, activation and nuclear translocation. Interacts with NOTCH1 (By similarity).</text>
</comment>
<comment type="subcellular location">
    <subcellularLocation>
        <location evidence="2">Endoplasmic reticulum</location>
    </subcellularLocation>
    <subcellularLocation>
        <location evidence="2">Sarcoplasmic reticulum</location>
    </subcellularLocation>
    <subcellularLocation>
        <location evidence="2">Secreted</location>
    </subcellularLocation>
    <subcellularLocation>
        <location evidence="2">Secreted</location>
        <location evidence="2">Extracellular space</location>
    </subcellularLocation>
    <subcellularLocation>
        <location evidence="2">Secreted</location>
        <location evidence="2">Extracellular space</location>
        <location evidence="2">Extracellular matrix</location>
    </subcellularLocation>
</comment>
<comment type="tissue specificity">
    <text evidence="7 8">Mainly expressed in astrocytes, and in ressponse to peripheral nerve injury, significantly up-regulated in the dorsal spinal cord (at protein level).</text>
</comment>
<comment type="similarity">
    <text evidence="9">Belongs to the thrombospondin family.</text>
</comment>
<proteinExistence type="evidence at protein level"/>
<organism>
    <name type="scientific">Rattus norvegicus</name>
    <name type="common">Rat</name>
    <dbReference type="NCBI Taxonomy" id="10116"/>
    <lineage>
        <taxon>Eukaryota</taxon>
        <taxon>Metazoa</taxon>
        <taxon>Chordata</taxon>
        <taxon>Craniata</taxon>
        <taxon>Vertebrata</taxon>
        <taxon>Euteleostomi</taxon>
        <taxon>Mammalia</taxon>
        <taxon>Eutheria</taxon>
        <taxon>Euarchontoglires</taxon>
        <taxon>Glires</taxon>
        <taxon>Rodentia</taxon>
        <taxon>Myomorpha</taxon>
        <taxon>Muroidea</taxon>
        <taxon>Muridae</taxon>
        <taxon>Murinae</taxon>
        <taxon>Rattus</taxon>
    </lineage>
</organism>